<evidence type="ECO:0000255" key="1">
    <source>
        <dbReference type="HAMAP-Rule" id="MF_00671"/>
    </source>
</evidence>
<comment type="function">
    <text evidence="1">Part of the Tol-Pal system, which plays a role in outer membrane invagination during cell division and is important for maintaining outer membrane integrity.</text>
</comment>
<comment type="subunit">
    <text evidence="1">The Tol-Pal system is composed of five core proteins: the inner membrane proteins TolA, TolQ and TolR, the periplasmic protein TolB and the outer membrane protein Pal. They form a network linking the inner and outer membranes and the peptidoglycan layer.</text>
</comment>
<comment type="subcellular location">
    <subcellularLocation>
        <location evidence="1">Periplasm</location>
    </subcellularLocation>
</comment>
<comment type="similarity">
    <text evidence="1">Belongs to the TolB family.</text>
</comment>
<gene>
    <name evidence="1" type="primary">tolB</name>
    <name type="ordered locus">Tgr7_2229</name>
</gene>
<feature type="signal peptide" evidence="1">
    <location>
        <begin position="1"/>
        <end position="24"/>
    </location>
</feature>
<feature type="chain" id="PRO_5000428656" description="Tol-Pal system protein TolB" evidence="1">
    <location>
        <begin position="25"/>
        <end position="435"/>
    </location>
</feature>
<keyword id="KW-0131">Cell cycle</keyword>
<keyword id="KW-0132">Cell division</keyword>
<keyword id="KW-0574">Periplasm</keyword>
<keyword id="KW-1185">Reference proteome</keyword>
<keyword id="KW-0732">Signal</keyword>
<protein>
    <recommendedName>
        <fullName evidence="1">Tol-Pal system protein TolB</fullName>
    </recommendedName>
</protein>
<accession>B8GUI9</accession>
<dbReference type="EMBL" id="CP001339">
    <property type="protein sequence ID" value="ACL73309.1"/>
    <property type="molecule type" value="Genomic_DNA"/>
</dbReference>
<dbReference type="RefSeq" id="WP_012638785.1">
    <property type="nucleotide sequence ID" value="NC_011901.1"/>
</dbReference>
<dbReference type="SMR" id="B8GUI9"/>
<dbReference type="STRING" id="396588.Tgr7_2229"/>
<dbReference type="KEGG" id="tgr:Tgr7_2229"/>
<dbReference type="eggNOG" id="COG0823">
    <property type="taxonomic scope" value="Bacteria"/>
</dbReference>
<dbReference type="HOGENOM" id="CLU_047123_0_0_6"/>
<dbReference type="OrthoDB" id="9802240at2"/>
<dbReference type="Proteomes" id="UP000002383">
    <property type="component" value="Chromosome"/>
</dbReference>
<dbReference type="GO" id="GO:0042597">
    <property type="term" value="C:periplasmic space"/>
    <property type="evidence" value="ECO:0007669"/>
    <property type="project" value="UniProtKB-SubCell"/>
</dbReference>
<dbReference type="GO" id="GO:0051301">
    <property type="term" value="P:cell division"/>
    <property type="evidence" value="ECO:0007669"/>
    <property type="project" value="UniProtKB-UniRule"/>
</dbReference>
<dbReference type="GO" id="GO:0017038">
    <property type="term" value="P:protein import"/>
    <property type="evidence" value="ECO:0007669"/>
    <property type="project" value="InterPro"/>
</dbReference>
<dbReference type="Gene3D" id="2.120.10.30">
    <property type="entry name" value="TolB, C-terminal domain"/>
    <property type="match status" value="1"/>
</dbReference>
<dbReference type="Gene3D" id="3.40.50.10070">
    <property type="entry name" value="TolB, N-terminal domain"/>
    <property type="match status" value="1"/>
</dbReference>
<dbReference type="HAMAP" id="MF_00671">
    <property type="entry name" value="TolB"/>
    <property type="match status" value="1"/>
</dbReference>
<dbReference type="InterPro" id="IPR011042">
    <property type="entry name" value="6-blade_b-propeller_TolB-like"/>
</dbReference>
<dbReference type="InterPro" id="IPR011659">
    <property type="entry name" value="PD40"/>
</dbReference>
<dbReference type="InterPro" id="IPR014167">
    <property type="entry name" value="Tol-Pal_TolB"/>
</dbReference>
<dbReference type="InterPro" id="IPR007195">
    <property type="entry name" value="TolB_N"/>
</dbReference>
<dbReference type="NCBIfam" id="TIGR02800">
    <property type="entry name" value="propeller_TolB"/>
    <property type="match status" value="1"/>
</dbReference>
<dbReference type="PANTHER" id="PTHR36842:SF1">
    <property type="entry name" value="PROTEIN TOLB"/>
    <property type="match status" value="1"/>
</dbReference>
<dbReference type="PANTHER" id="PTHR36842">
    <property type="entry name" value="PROTEIN TOLB HOMOLOG"/>
    <property type="match status" value="1"/>
</dbReference>
<dbReference type="Pfam" id="PF07676">
    <property type="entry name" value="PD40"/>
    <property type="match status" value="5"/>
</dbReference>
<dbReference type="Pfam" id="PF04052">
    <property type="entry name" value="TolB_N"/>
    <property type="match status" value="1"/>
</dbReference>
<dbReference type="SUPFAM" id="SSF52964">
    <property type="entry name" value="TolB, N-terminal domain"/>
    <property type="match status" value="1"/>
</dbReference>
<dbReference type="SUPFAM" id="SSF69304">
    <property type="entry name" value="Tricorn protease N-terminal domain"/>
    <property type="match status" value="1"/>
</dbReference>
<name>TOLB_THISH</name>
<organism>
    <name type="scientific">Thioalkalivibrio sulfidiphilus (strain HL-EbGR7)</name>
    <dbReference type="NCBI Taxonomy" id="396588"/>
    <lineage>
        <taxon>Bacteria</taxon>
        <taxon>Pseudomonadati</taxon>
        <taxon>Pseudomonadota</taxon>
        <taxon>Gammaproteobacteria</taxon>
        <taxon>Chromatiales</taxon>
        <taxon>Ectothiorhodospiraceae</taxon>
        <taxon>Thioalkalivibrio</taxon>
    </lineage>
</organism>
<sequence>MIPMPKMIRSLLLLFCLLPLGAQAALEIRITQGVEGAMPIAIVPFGWEGPGARPPEDIGAIIQANLHRSGQFSPMEQGRMPQRPTRGQDVNFQVWRGAGVDYVVIGRLVPAGADRFNVQFQLFDTVRGRQVTGYSIPASSSQLRRAAHMASDIIYQQITGVRGAFNTRVAYVSVTREGGEQRFALQVADADGHNPRTIFRSRQPILSPVWSPDGRRLAYVSFENRNSEIYVQDIDGAQRERIASFQGINSAPAWSPDGRRMALTLSRDGQPDIYVMNLADRSLLRVTNSRSIDTEPEWTPDGRNLLFTSDRAGNPQIYEQSLSGGQPRRLTFDGRYNGNPTLSPDGRLVAMVNGDGGRFRIAVLDRQTRQFRLLTDGRLDEAPSFAPNGSMIIYATAGRGGQGELAAVSADGRVRQSLVLQEGEVREPAWSPFLD</sequence>
<reference key="1">
    <citation type="journal article" date="2011" name="Stand. Genomic Sci.">
        <title>Complete genome sequence of 'Thioalkalivibrio sulfidophilus' HL-EbGr7.</title>
        <authorList>
            <person name="Muyzer G."/>
            <person name="Sorokin D.Y."/>
            <person name="Mavromatis K."/>
            <person name="Lapidus A."/>
            <person name="Clum A."/>
            <person name="Ivanova N."/>
            <person name="Pati A."/>
            <person name="d'Haeseleer P."/>
            <person name="Woyke T."/>
            <person name="Kyrpides N.C."/>
        </authorList>
    </citation>
    <scope>NUCLEOTIDE SEQUENCE [LARGE SCALE GENOMIC DNA]</scope>
    <source>
        <strain>HL-EbGR7</strain>
    </source>
</reference>
<proteinExistence type="inferred from homology"/>